<accession>Q0QHL3</accession>
<protein>
    <recommendedName>
        <fullName>Probable citrate synthase, mitochondrial</fullName>
        <ecNumber>2.3.3.16</ecNumber>
    </recommendedName>
</protein>
<evidence type="ECO:0000250" key="1"/>
<evidence type="ECO:0000255" key="2"/>
<evidence type="ECO:0000255" key="3">
    <source>
        <dbReference type="PROSITE-ProRule" id="PRU10117"/>
    </source>
</evidence>
<evidence type="ECO:0000305" key="4"/>
<dbReference type="EC" id="2.3.3.16"/>
<dbReference type="EMBL" id="DQ374006">
    <property type="protein sequence ID" value="ABG77984.1"/>
    <property type="molecule type" value="mRNA"/>
</dbReference>
<dbReference type="SMR" id="Q0QHL3"/>
<dbReference type="STRING" id="37546.Q0QHL3"/>
<dbReference type="UniPathway" id="UPA00223">
    <property type="reaction ID" value="UER00717"/>
</dbReference>
<dbReference type="Proteomes" id="UP000092444">
    <property type="component" value="Unassembled WGS sequence"/>
</dbReference>
<dbReference type="GO" id="GO:0005759">
    <property type="term" value="C:mitochondrial matrix"/>
    <property type="evidence" value="ECO:0000250"/>
    <property type="project" value="UniProtKB"/>
</dbReference>
<dbReference type="GO" id="GO:0004108">
    <property type="term" value="F:citrate (Si)-synthase activity"/>
    <property type="evidence" value="ECO:0000250"/>
    <property type="project" value="UniProtKB"/>
</dbReference>
<dbReference type="GO" id="GO:0005975">
    <property type="term" value="P:carbohydrate metabolic process"/>
    <property type="evidence" value="ECO:0000250"/>
    <property type="project" value="UniProtKB"/>
</dbReference>
<dbReference type="GO" id="GO:0006101">
    <property type="term" value="P:citrate metabolic process"/>
    <property type="evidence" value="ECO:0007669"/>
    <property type="project" value="InterPro"/>
</dbReference>
<dbReference type="GO" id="GO:0006099">
    <property type="term" value="P:tricarboxylic acid cycle"/>
    <property type="evidence" value="ECO:0007669"/>
    <property type="project" value="UniProtKB-UniPathway"/>
</dbReference>
<dbReference type="CDD" id="cd06105">
    <property type="entry name" value="ScCit1-2_like"/>
    <property type="match status" value="1"/>
</dbReference>
<dbReference type="FunFam" id="1.10.230.10:FF:000001">
    <property type="entry name" value="Citrate synthase"/>
    <property type="match status" value="1"/>
</dbReference>
<dbReference type="FunFam" id="1.10.580.10:FF:000001">
    <property type="entry name" value="Citrate synthase"/>
    <property type="match status" value="1"/>
</dbReference>
<dbReference type="Gene3D" id="1.10.580.10">
    <property type="entry name" value="Citrate Synthase, domain 1"/>
    <property type="match status" value="1"/>
</dbReference>
<dbReference type="Gene3D" id="1.10.230.10">
    <property type="entry name" value="Cytochrome P450-Terp, domain 2"/>
    <property type="match status" value="1"/>
</dbReference>
<dbReference type="InterPro" id="IPR016142">
    <property type="entry name" value="Citrate_synth-like_lrg_a-sub"/>
</dbReference>
<dbReference type="InterPro" id="IPR016143">
    <property type="entry name" value="Citrate_synth-like_sm_a-sub"/>
</dbReference>
<dbReference type="InterPro" id="IPR002020">
    <property type="entry name" value="Citrate_synthase"/>
</dbReference>
<dbReference type="InterPro" id="IPR019810">
    <property type="entry name" value="Citrate_synthase_AS"/>
</dbReference>
<dbReference type="InterPro" id="IPR010109">
    <property type="entry name" value="Citrate_synthase_euk"/>
</dbReference>
<dbReference type="InterPro" id="IPR036969">
    <property type="entry name" value="Citrate_synthase_sf"/>
</dbReference>
<dbReference type="NCBIfam" id="TIGR01793">
    <property type="entry name" value="cit_synth_euk"/>
    <property type="match status" value="1"/>
</dbReference>
<dbReference type="NCBIfam" id="NF007128">
    <property type="entry name" value="PRK09569.1"/>
    <property type="match status" value="1"/>
</dbReference>
<dbReference type="PANTHER" id="PTHR11739">
    <property type="entry name" value="CITRATE SYNTHASE"/>
    <property type="match status" value="1"/>
</dbReference>
<dbReference type="PANTHER" id="PTHR11739:SF8">
    <property type="entry name" value="CITRATE SYNTHASE, MITOCHONDRIAL"/>
    <property type="match status" value="1"/>
</dbReference>
<dbReference type="Pfam" id="PF00285">
    <property type="entry name" value="Citrate_synt"/>
    <property type="match status" value="1"/>
</dbReference>
<dbReference type="PRINTS" id="PR00143">
    <property type="entry name" value="CITRTSNTHASE"/>
</dbReference>
<dbReference type="SUPFAM" id="SSF48256">
    <property type="entry name" value="Citrate synthase"/>
    <property type="match status" value="1"/>
</dbReference>
<dbReference type="PROSITE" id="PS00480">
    <property type="entry name" value="CITRATE_SYNTHASE"/>
    <property type="match status" value="1"/>
</dbReference>
<comment type="catalytic activity">
    <reaction evidence="3">
        <text>oxaloacetate + acetyl-CoA + H2O = citrate + CoA + H(+)</text>
        <dbReference type="Rhea" id="RHEA:16845"/>
        <dbReference type="ChEBI" id="CHEBI:15377"/>
        <dbReference type="ChEBI" id="CHEBI:15378"/>
        <dbReference type="ChEBI" id="CHEBI:16452"/>
        <dbReference type="ChEBI" id="CHEBI:16947"/>
        <dbReference type="ChEBI" id="CHEBI:57287"/>
        <dbReference type="ChEBI" id="CHEBI:57288"/>
        <dbReference type="EC" id="2.3.3.16"/>
    </reaction>
</comment>
<comment type="pathway">
    <text>Carbohydrate metabolism; tricarboxylic acid cycle; isocitrate from oxaloacetate: step 1/2.</text>
</comment>
<comment type="subunit">
    <text evidence="1">Homodimer.</text>
</comment>
<comment type="subcellular location">
    <subcellularLocation>
        <location evidence="1">Mitochondrion matrix</location>
    </subcellularLocation>
</comment>
<comment type="miscellaneous">
    <text>Citrate synthase is found in nearly all cells capable of oxidative metabolism.</text>
</comment>
<comment type="similarity">
    <text evidence="4">Belongs to the citrate synthase family.</text>
</comment>
<proteinExistence type="evidence at transcript level"/>
<keyword id="KW-0496">Mitochondrion</keyword>
<keyword id="KW-0808">Transferase</keyword>
<keyword id="KW-0809">Transit peptide</keyword>
<keyword id="KW-0816">Tricarboxylic acid cycle</keyword>
<feature type="transit peptide" description="Mitochondrion" evidence="2">
    <location>
        <begin position="1"/>
        <end status="unknown"/>
    </location>
</feature>
<feature type="chain" id="PRO_0000291557" description="Probable citrate synthase, mitochondrial">
    <location>
        <begin status="unknown"/>
        <end position="465"/>
    </location>
</feature>
<feature type="active site" evidence="3">
    <location>
        <position position="303"/>
    </location>
</feature>
<feature type="active site" evidence="3">
    <location>
        <position position="349"/>
    </location>
</feature>
<feature type="active site" evidence="3">
    <location>
        <position position="404"/>
    </location>
</feature>
<reference key="1">
    <citation type="journal article" date="2006" name="Insect Mol. Biol.">
        <title>Analysis of fat body transcriptome from the adult tsetse fly, Glossina morsitans morsitans.</title>
        <authorList>
            <person name="Attardo G.M."/>
            <person name="Strickler-Dinglasan P."/>
            <person name="Perkin S.A.H."/>
            <person name="Caler E."/>
            <person name="Bonaldo M.F."/>
            <person name="Soares M.B."/>
            <person name="El-Sayeed N.M.A."/>
            <person name="Aksoy S."/>
        </authorList>
    </citation>
    <scope>NUCLEOTIDE SEQUENCE [LARGE SCALE MRNA]</scope>
    <source>
        <tissue>Fat body</tissue>
    </source>
</reference>
<name>CISY_GLOMM</name>
<sequence length="465" mass="51864">MSIYRISTTRKMPEVQKLNALLASYVRFISADSSLRDVLAAKIPAEQERVKNFRKQHGSFKMGETTVDMMYGGMRGIKALVTETSVLDADEGIRFRGLSIPECQKVLPAADGGEEPLPEGLFWLLLTGEVPSKAQVKQVSREWAARAALPQHVVTMLNNFPTSLHPMSQFSAAITALNHDSKFAKAYSDGVHKSKYWEHVYEDSMDLIAKLPVVAATIYCNTYRNGKGSKSIDSSLDWSANFVKMLGYDDPKFTELMRLYLTIHSDHEGGNVSAHTVHLVGSALSDPYLSFAAGMNGLAGPLHGLANQEVLVWLRKLQKEAGSNPSEEQLKEYIWKTLKSGQVVPGYGHAVLRKTDPRYTCQREFALKHLPNDELFQLVSKIYKVVPPILQETGKVKNPWPNVDAHSGVLLQYYGMKEMNYYTVLFGVSRALGVLASLVWDRALGLPIERPKSLSTDLLMKMVQK</sequence>
<organism>
    <name type="scientific">Glossina morsitans morsitans</name>
    <name type="common">Savannah tsetse fly</name>
    <dbReference type="NCBI Taxonomy" id="37546"/>
    <lineage>
        <taxon>Eukaryota</taxon>
        <taxon>Metazoa</taxon>
        <taxon>Ecdysozoa</taxon>
        <taxon>Arthropoda</taxon>
        <taxon>Hexapoda</taxon>
        <taxon>Insecta</taxon>
        <taxon>Pterygota</taxon>
        <taxon>Neoptera</taxon>
        <taxon>Endopterygota</taxon>
        <taxon>Diptera</taxon>
        <taxon>Brachycera</taxon>
        <taxon>Muscomorpha</taxon>
        <taxon>Hippoboscoidea</taxon>
        <taxon>Glossinidae</taxon>
        <taxon>Glossina</taxon>
    </lineage>
</organism>